<accession>F4K4C5</accession>
<dbReference type="EMBL" id="AC007123">
    <property type="status" value="NOT_ANNOTATED_CDS"/>
    <property type="molecule type" value="Genomic_DNA"/>
</dbReference>
<dbReference type="EMBL" id="AC007478">
    <property type="status" value="NOT_ANNOTATED_CDS"/>
    <property type="molecule type" value="Genomic_DNA"/>
</dbReference>
<dbReference type="EMBL" id="CP002688">
    <property type="protein sequence ID" value="AED93700.1"/>
    <property type="molecule type" value="Genomic_DNA"/>
</dbReference>
<dbReference type="EMBL" id="CP002688">
    <property type="protein sequence ID" value="ANM69400.1"/>
    <property type="molecule type" value="Genomic_DNA"/>
</dbReference>
<dbReference type="RefSeq" id="NP_001318663.1">
    <property type="nucleotide sequence ID" value="NM_001344014.1"/>
</dbReference>
<dbReference type="RefSeq" id="NP_198107.3">
    <property type="nucleotide sequence ID" value="NM_122637.4"/>
</dbReference>
<dbReference type="SMR" id="F4K4C5"/>
<dbReference type="FunCoup" id="F4K4C5">
    <property type="interactions" value="578"/>
</dbReference>
<dbReference type="STRING" id="3702.F4K4C5"/>
<dbReference type="PaxDb" id="3702-AT5G27550.1"/>
<dbReference type="ProteomicsDB" id="238200"/>
<dbReference type="EnsemblPlants" id="AT5G27550.1">
    <property type="protein sequence ID" value="AT5G27550.1"/>
    <property type="gene ID" value="AT5G27550"/>
</dbReference>
<dbReference type="EnsemblPlants" id="AT5G27550.2">
    <property type="protein sequence ID" value="AT5G27550.2"/>
    <property type="gene ID" value="AT5G27550"/>
</dbReference>
<dbReference type="GeneID" id="832815"/>
<dbReference type="Gramene" id="AT5G27550.1">
    <property type="protein sequence ID" value="AT5G27550.1"/>
    <property type="gene ID" value="AT5G27550"/>
</dbReference>
<dbReference type="Gramene" id="AT5G27550.2">
    <property type="protein sequence ID" value="AT5G27550.2"/>
    <property type="gene ID" value="AT5G27550"/>
</dbReference>
<dbReference type="KEGG" id="ath:AT5G27550"/>
<dbReference type="Araport" id="AT5G27550"/>
<dbReference type="TAIR" id="AT5G27550"/>
<dbReference type="eggNOG" id="KOG0239">
    <property type="taxonomic scope" value="Eukaryota"/>
</dbReference>
<dbReference type="HOGENOM" id="CLU_007631_2_1_1"/>
<dbReference type="InParanoid" id="F4K4C5"/>
<dbReference type="OMA" id="HPEICSD"/>
<dbReference type="OrthoDB" id="3176171at2759"/>
<dbReference type="PRO" id="PR:F4K4C5"/>
<dbReference type="Proteomes" id="UP000006548">
    <property type="component" value="Chromosome 5"/>
</dbReference>
<dbReference type="ExpressionAtlas" id="F4K4C5">
    <property type="expression patterns" value="baseline and differential"/>
</dbReference>
<dbReference type="GO" id="GO:0005874">
    <property type="term" value="C:microtubule"/>
    <property type="evidence" value="ECO:0007669"/>
    <property type="project" value="UniProtKB-KW"/>
</dbReference>
<dbReference type="GO" id="GO:0005524">
    <property type="term" value="F:ATP binding"/>
    <property type="evidence" value="ECO:0007669"/>
    <property type="project" value="UniProtKB-KW"/>
</dbReference>
<dbReference type="GO" id="GO:0008017">
    <property type="term" value="F:microtubule binding"/>
    <property type="evidence" value="ECO:0007669"/>
    <property type="project" value="InterPro"/>
</dbReference>
<dbReference type="GO" id="GO:0003777">
    <property type="term" value="F:microtubule motor activity"/>
    <property type="evidence" value="ECO:0007669"/>
    <property type="project" value="InterPro"/>
</dbReference>
<dbReference type="GO" id="GO:0007018">
    <property type="term" value="P:microtubule-based movement"/>
    <property type="evidence" value="ECO:0007669"/>
    <property type="project" value="InterPro"/>
</dbReference>
<dbReference type="CDD" id="cd01366">
    <property type="entry name" value="KISc_C_terminal"/>
    <property type="match status" value="1"/>
</dbReference>
<dbReference type="FunFam" id="3.40.850.10:FF:000061">
    <property type="entry name" value="Kinesin-like protein"/>
    <property type="match status" value="1"/>
</dbReference>
<dbReference type="Gene3D" id="3.40.850.10">
    <property type="entry name" value="Kinesin motor domain"/>
    <property type="match status" value="1"/>
</dbReference>
<dbReference type="InterPro" id="IPR027640">
    <property type="entry name" value="Kinesin-like_fam"/>
</dbReference>
<dbReference type="InterPro" id="IPR019821">
    <property type="entry name" value="Kinesin_motor_CS"/>
</dbReference>
<dbReference type="InterPro" id="IPR001752">
    <property type="entry name" value="Kinesin_motor_dom"/>
</dbReference>
<dbReference type="InterPro" id="IPR036961">
    <property type="entry name" value="Kinesin_motor_dom_sf"/>
</dbReference>
<dbReference type="InterPro" id="IPR027417">
    <property type="entry name" value="P-loop_NTPase"/>
</dbReference>
<dbReference type="PANTHER" id="PTHR47972:SF2">
    <property type="entry name" value="KINESIN-LIKE PROTEIN KIN-14S"/>
    <property type="match status" value="1"/>
</dbReference>
<dbReference type="PANTHER" id="PTHR47972">
    <property type="entry name" value="KINESIN-LIKE PROTEIN KLP-3"/>
    <property type="match status" value="1"/>
</dbReference>
<dbReference type="Pfam" id="PF00225">
    <property type="entry name" value="Kinesin"/>
    <property type="match status" value="1"/>
</dbReference>
<dbReference type="PRINTS" id="PR00380">
    <property type="entry name" value="KINESINHEAVY"/>
</dbReference>
<dbReference type="SMART" id="SM00129">
    <property type="entry name" value="KISc"/>
    <property type="match status" value="1"/>
</dbReference>
<dbReference type="SUPFAM" id="SSF52540">
    <property type="entry name" value="P-loop containing nucleoside triphosphate hydrolases"/>
    <property type="match status" value="1"/>
</dbReference>
<dbReference type="PROSITE" id="PS00411">
    <property type="entry name" value="KINESIN_MOTOR_1"/>
    <property type="match status" value="1"/>
</dbReference>
<dbReference type="PROSITE" id="PS50067">
    <property type="entry name" value="KINESIN_MOTOR_2"/>
    <property type="match status" value="1"/>
</dbReference>
<organism>
    <name type="scientific">Arabidopsis thaliana</name>
    <name type="common">Mouse-ear cress</name>
    <dbReference type="NCBI Taxonomy" id="3702"/>
    <lineage>
        <taxon>Eukaryota</taxon>
        <taxon>Viridiplantae</taxon>
        <taxon>Streptophyta</taxon>
        <taxon>Embryophyta</taxon>
        <taxon>Tracheophyta</taxon>
        <taxon>Spermatophyta</taxon>
        <taxon>Magnoliopsida</taxon>
        <taxon>eudicotyledons</taxon>
        <taxon>Gunneridae</taxon>
        <taxon>Pentapetalae</taxon>
        <taxon>rosids</taxon>
        <taxon>malvids</taxon>
        <taxon>Brassicales</taxon>
        <taxon>Brassicaceae</taxon>
        <taxon>Camelineae</taxon>
        <taxon>Arabidopsis</taxon>
    </lineage>
</organism>
<protein>
    <recommendedName>
        <fullName evidence="5">Kinesin-like protein KIN-14S</fullName>
    </recommendedName>
</protein>
<name>KN14S_ARATH</name>
<proteinExistence type="inferred from homology"/>
<feature type="chain" id="PRO_0000438052" description="Kinesin-like protein KIN-14S">
    <location>
        <begin position="1"/>
        <end position="765"/>
    </location>
</feature>
<feature type="domain" description="Kinesin motor" evidence="2">
    <location>
        <begin position="132"/>
        <end position="456"/>
    </location>
</feature>
<feature type="region of interest" description="Disordered" evidence="3">
    <location>
        <begin position="581"/>
        <end position="613"/>
    </location>
</feature>
<feature type="region of interest" description="Disordered" evidence="3">
    <location>
        <begin position="654"/>
        <end position="678"/>
    </location>
</feature>
<feature type="coiled-coil region" evidence="1">
    <location>
        <begin position="469"/>
        <end position="534"/>
    </location>
</feature>
<feature type="compositionally biased region" description="Low complexity" evidence="3">
    <location>
        <begin position="602"/>
        <end position="611"/>
    </location>
</feature>
<feature type="binding site" evidence="2">
    <location>
        <begin position="215"/>
        <end position="222"/>
    </location>
    <ligand>
        <name>ATP</name>
        <dbReference type="ChEBI" id="CHEBI:30616"/>
    </ligand>
</feature>
<keyword id="KW-0067">ATP-binding</keyword>
<keyword id="KW-0175">Coiled coil</keyword>
<keyword id="KW-0493">Microtubule</keyword>
<keyword id="KW-0505">Motor protein</keyword>
<keyword id="KW-0547">Nucleotide-binding</keyword>
<keyword id="KW-1185">Reference proteome</keyword>
<reference key="1">
    <citation type="journal article" date="2000" name="Nature">
        <title>Sequence and analysis of chromosome 5 of the plant Arabidopsis thaliana.</title>
        <authorList>
            <person name="Tabata S."/>
            <person name="Kaneko T."/>
            <person name="Nakamura Y."/>
            <person name="Kotani H."/>
            <person name="Kato T."/>
            <person name="Asamizu E."/>
            <person name="Miyajima N."/>
            <person name="Sasamoto S."/>
            <person name="Kimura T."/>
            <person name="Hosouchi T."/>
            <person name="Kawashima K."/>
            <person name="Kohara M."/>
            <person name="Matsumoto M."/>
            <person name="Matsuno A."/>
            <person name="Muraki A."/>
            <person name="Nakayama S."/>
            <person name="Nakazaki N."/>
            <person name="Naruo K."/>
            <person name="Okumura S."/>
            <person name="Shinpo S."/>
            <person name="Takeuchi C."/>
            <person name="Wada T."/>
            <person name="Watanabe A."/>
            <person name="Yamada M."/>
            <person name="Yasuda M."/>
            <person name="Sato S."/>
            <person name="de la Bastide M."/>
            <person name="Huang E."/>
            <person name="Spiegel L."/>
            <person name="Gnoj L."/>
            <person name="O'Shaughnessy A."/>
            <person name="Preston R."/>
            <person name="Habermann K."/>
            <person name="Murray J."/>
            <person name="Johnson D."/>
            <person name="Rohlfing T."/>
            <person name="Nelson J."/>
            <person name="Stoneking T."/>
            <person name="Pepin K."/>
            <person name="Spieth J."/>
            <person name="Sekhon M."/>
            <person name="Armstrong J."/>
            <person name="Becker M."/>
            <person name="Belter E."/>
            <person name="Cordum H."/>
            <person name="Cordes M."/>
            <person name="Courtney L."/>
            <person name="Courtney W."/>
            <person name="Dante M."/>
            <person name="Du H."/>
            <person name="Edwards J."/>
            <person name="Fryman J."/>
            <person name="Haakensen B."/>
            <person name="Lamar E."/>
            <person name="Latreille P."/>
            <person name="Leonard S."/>
            <person name="Meyer R."/>
            <person name="Mulvaney E."/>
            <person name="Ozersky P."/>
            <person name="Riley A."/>
            <person name="Strowmatt C."/>
            <person name="Wagner-McPherson C."/>
            <person name="Wollam A."/>
            <person name="Yoakum M."/>
            <person name="Bell M."/>
            <person name="Dedhia N."/>
            <person name="Parnell L."/>
            <person name="Shah R."/>
            <person name="Rodriguez M."/>
            <person name="Hoon See L."/>
            <person name="Vil D."/>
            <person name="Baker J."/>
            <person name="Kirchoff K."/>
            <person name="Toth K."/>
            <person name="King L."/>
            <person name="Bahret A."/>
            <person name="Miller B."/>
            <person name="Marra M.A."/>
            <person name="Martienssen R."/>
            <person name="McCombie W.R."/>
            <person name="Wilson R.K."/>
            <person name="Murphy G."/>
            <person name="Bancroft I."/>
            <person name="Volckaert G."/>
            <person name="Wambutt R."/>
            <person name="Duesterhoeft A."/>
            <person name="Stiekema W."/>
            <person name="Pohl T."/>
            <person name="Entian K.-D."/>
            <person name="Terryn N."/>
            <person name="Hartley N."/>
            <person name="Bent E."/>
            <person name="Johnson S."/>
            <person name="Langham S.-A."/>
            <person name="McCullagh B."/>
            <person name="Robben J."/>
            <person name="Grymonprez B."/>
            <person name="Zimmermann W."/>
            <person name="Ramsperger U."/>
            <person name="Wedler H."/>
            <person name="Balke K."/>
            <person name="Wedler E."/>
            <person name="Peters S."/>
            <person name="van Staveren M."/>
            <person name="Dirkse W."/>
            <person name="Mooijman P."/>
            <person name="Klein Lankhorst R."/>
            <person name="Weitzenegger T."/>
            <person name="Bothe G."/>
            <person name="Rose M."/>
            <person name="Hauf J."/>
            <person name="Berneiser S."/>
            <person name="Hempel S."/>
            <person name="Feldpausch M."/>
            <person name="Lamberth S."/>
            <person name="Villarroel R."/>
            <person name="Gielen J."/>
            <person name="Ardiles W."/>
            <person name="Bents O."/>
            <person name="Lemcke K."/>
            <person name="Kolesov G."/>
            <person name="Mayer K.F.X."/>
            <person name="Rudd S."/>
            <person name="Schoof H."/>
            <person name="Schueller C."/>
            <person name="Zaccaria P."/>
            <person name="Mewes H.-W."/>
            <person name="Bevan M."/>
            <person name="Fransz P.F."/>
        </authorList>
    </citation>
    <scope>NUCLEOTIDE SEQUENCE [LARGE SCALE GENOMIC DNA]</scope>
    <source>
        <strain>cv. Columbia</strain>
    </source>
</reference>
<reference key="2">
    <citation type="journal article" date="2017" name="Plant J.">
        <title>Araport11: a complete reannotation of the Arabidopsis thaliana reference genome.</title>
        <authorList>
            <person name="Cheng C.Y."/>
            <person name="Krishnakumar V."/>
            <person name="Chan A.P."/>
            <person name="Thibaud-Nissen F."/>
            <person name="Schobel S."/>
            <person name="Town C.D."/>
        </authorList>
    </citation>
    <scope>GENOME REANNOTATION</scope>
    <source>
        <strain>cv. Columbia</strain>
    </source>
</reference>
<reference key="3">
    <citation type="journal article" date="2001" name="BMC Genomics">
        <title>Kinesins in the Arabidopsis genome: a comparative analysis among eukaryotes.</title>
        <authorList>
            <person name="Reddy A.S."/>
            <person name="Day I.S."/>
        </authorList>
    </citation>
    <scope>GENE FAMILY</scope>
</reference>
<reference key="4">
    <citation type="journal article" date="2006" name="BMC Genomics">
        <title>Comprehensive comparative analysis of kinesins in photosynthetic eukaryotes.</title>
        <authorList>
            <person name="Richardson D.N."/>
            <person name="Simmons M.P."/>
            <person name="Reddy A.S."/>
        </authorList>
    </citation>
    <scope>GENE FAMILY</scope>
    <scope>NOMENCLATURE</scope>
</reference>
<reference key="5">
    <citation type="journal article" date="2012" name="Protoplasma">
        <title>Functions of the Arabidopsis kinesin superfamily of microtubule-based motor proteins.</title>
        <authorList>
            <person name="Zhu C."/>
            <person name="Dixit R."/>
        </authorList>
    </citation>
    <scope>REVIEW</scope>
</reference>
<evidence type="ECO:0000255" key="1"/>
<evidence type="ECO:0000255" key="2">
    <source>
        <dbReference type="PROSITE-ProRule" id="PRU00283"/>
    </source>
</evidence>
<evidence type="ECO:0000256" key="3">
    <source>
        <dbReference type="SAM" id="MobiDB-lite"/>
    </source>
</evidence>
<evidence type="ECO:0000303" key="4">
    <source>
    </source>
</evidence>
<evidence type="ECO:0000305" key="5"/>
<evidence type="ECO:0000312" key="6">
    <source>
        <dbReference type="Araport" id="AT5G27550"/>
    </source>
</evidence>
<evidence type="ECO:0000312" key="7">
    <source>
        <dbReference type="EMBL" id="AC007123"/>
    </source>
</evidence>
<evidence type="ECO:0000312" key="8">
    <source>
        <dbReference type="EMBL" id="AC007478"/>
    </source>
</evidence>
<sequence length="765" mass="85438">MERDQHQEICNDGGLLCESKEVSVNNHNSDAVEESEDTITSGNQEVSPANGPTLPILQKIIDCSDKIKILKDEHALVSNQVQEIKNCSLVEPEISRALQLLTTKLGALEKQYLEESSERKRLYNEVIELKGNIRVFCRCRPLNQAEIANGCASVAEFDTTQENELQILSSDSSKKHFKFDHVFKPDDGQETVFAQTKPIVTSVLDGYNVCIFAYGQTGTGKTFTMEGTPENRGVNYRTLEELFRCSESKSHLMKFELSVSMLEVYNEKIRDLLVDNSNQPPKKLEVKQSAEGTQEVPGLVEAQVYNTDGVWDLLKKGYAVRSVGSTAANEQSSRSHCLLRVTVKGENLINGQRTRSHLWLVDLAGSERVGKVEVEGERLKESQFINKSLSALGDVISALASKTSHIPYRNSKLTHMLQNSLGGDCKTLMFVQISPSSADLGETLCSLNFASRVRGIESGPARKQADVSELLKSKQMAEKLKHEEKETKKLQDNVQSLQLRLTAREHICRGLQDKVRDLEFQLAEERKTRIKQESRALATASSTTTTTSRHLRETLPTIIEKKPPLAPTRMRMPLRRITNFMPQQQPSQGHSKRFSDTTFKENNNSNRRSSSMDVNTLMKPRRSSIAFRPAPAPSAIASSNKTIMPRRRVSIATLRPEPSSLSSMETPSRPPPSFRGDPRKARYSKLFSPDRNLVTPNAMKSSRFMKSPLGGGGSSWKPSHPTVIALQKKAVVWSPLKFKNRRPSLVAIRSSASSSSASDLLRREQ</sequence>
<comment type="similarity">
    <text evidence="4">Belongs to the TRAFAC class myosin-kinesin ATPase superfamily. Kinesin family. KIN-14 subfamily.</text>
</comment>
<gene>
    <name evidence="5" type="primary">KIN14S</name>
    <name evidence="6" type="ordered locus">At5g27550</name>
    <name evidence="8" type="ORF">F15A18</name>
    <name evidence="7" type="ORF">F21A20</name>
</gene>